<keyword id="KW-0002">3D-structure</keyword>
<keyword id="KW-0007">Acetylation</keyword>
<keyword id="KW-0963">Cytoplasm</keyword>
<keyword id="KW-1185">Reference proteome</keyword>
<name>NAA25_YEAST</name>
<reference key="1">
    <citation type="submission" date="1995-09" db="EMBL/GenBank/DDBJ databases">
        <authorList>
            <person name="Kingsbury T.J."/>
            <person name="Hoyt M.A."/>
        </authorList>
    </citation>
    <scope>NUCLEOTIDE SEQUENCE [GENOMIC DNA]</scope>
</reference>
<reference key="2">
    <citation type="journal article" date="1997" name="J. Cell Biol.">
        <title>The yeast gene, MDM20, is necessary for mitochondrial inheritance and organization of the actin cytoskeleton.</title>
        <authorList>
            <person name="Hermann G.J."/>
            <person name="King E.J."/>
            <person name="Shaw J.M."/>
        </authorList>
    </citation>
    <scope>NUCLEOTIDE SEQUENCE [GENOMIC DNA]</scope>
    <scope>FUNCTION</scope>
</reference>
<reference key="3">
    <citation type="journal article" date="1997" name="Yeast">
        <title>Sequence analysis of a 33.2 kb segment from the left arm of yeast chromosome XV reveals eight known genes and ten new open reading frames including homologues of ABC transporters, inositol phosphatases and human expressed sequence tags.</title>
        <authorList>
            <person name="Tzermia M."/>
            <person name="Katsoulou C."/>
            <person name="Alexandraki D."/>
        </authorList>
    </citation>
    <scope>NUCLEOTIDE SEQUENCE [GENOMIC DNA]</scope>
</reference>
<reference key="4">
    <citation type="journal article" date="1997" name="Nature">
        <title>The nucleotide sequence of Saccharomyces cerevisiae chromosome XV.</title>
        <authorList>
            <person name="Dujon B."/>
            <person name="Albermann K."/>
            <person name="Aldea M."/>
            <person name="Alexandraki D."/>
            <person name="Ansorge W."/>
            <person name="Arino J."/>
            <person name="Benes V."/>
            <person name="Bohn C."/>
            <person name="Bolotin-Fukuhara M."/>
            <person name="Bordonne R."/>
            <person name="Boyer J."/>
            <person name="Camasses A."/>
            <person name="Casamayor A."/>
            <person name="Casas C."/>
            <person name="Cheret G."/>
            <person name="Cziepluch C."/>
            <person name="Daignan-Fornier B."/>
            <person name="Dang V.-D."/>
            <person name="de Haan M."/>
            <person name="Delius H."/>
            <person name="Durand P."/>
            <person name="Fairhead C."/>
            <person name="Feldmann H."/>
            <person name="Gaillon L."/>
            <person name="Galisson F."/>
            <person name="Gamo F.-J."/>
            <person name="Gancedo C."/>
            <person name="Goffeau A."/>
            <person name="Goulding S.E."/>
            <person name="Grivell L.A."/>
            <person name="Habbig B."/>
            <person name="Hand N.J."/>
            <person name="Hani J."/>
            <person name="Hattenhorst U."/>
            <person name="Hebling U."/>
            <person name="Hernando Y."/>
            <person name="Herrero E."/>
            <person name="Heumann K."/>
            <person name="Hiesel R."/>
            <person name="Hilger F."/>
            <person name="Hofmann B."/>
            <person name="Hollenberg C.P."/>
            <person name="Hughes B."/>
            <person name="Jauniaux J.-C."/>
            <person name="Kalogeropoulos A."/>
            <person name="Katsoulou C."/>
            <person name="Kordes E."/>
            <person name="Lafuente M.J."/>
            <person name="Landt O."/>
            <person name="Louis E.J."/>
            <person name="Maarse A.C."/>
            <person name="Madania A."/>
            <person name="Mannhaupt G."/>
            <person name="Marck C."/>
            <person name="Martin R.P."/>
            <person name="Mewes H.-W."/>
            <person name="Michaux G."/>
            <person name="Paces V."/>
            <person name="Parle-McDermott A.G."/>
            <person name="Pearson B.M."/>
            <person name="Perrin A."/>
            <person name="Pettersson B."/>
            <person name="Poch O."/>
            <person name="Pohl T.M."/>
            <person name="Poirey R."/>
            <person name="Portetelle D."/>
            <person name="Pujol A."/>
            <person name="Purnelle B."/>
            <person name="Ramezani Rad M."/>
            <person name="Rechmann S."/>
            <person name="Schwager C."/>
            <person name="Schweizer M."/>
            <person name="Sor F."/>
            <person name="Sterky F."/>
            <person name="Tarassov I.A."/>
            <person name="Teodoru C."/>
            <person name="Tettelin H."/>
            <person name="Thierry A."/>
            <person name="Tobiasch E."/>
            <person name="Tzermia M."/>
            <person name="Uhlen M."/>
            <person name="Unseld M."/>
            <person name="Valens M."/>
            <person name="Vandenbol M."/>
            <person name="Vetter I."/>
            <person name="Vlcek C."/>
            <person name="Voet M."/>
            <person name="Volckaert G."/>
            <person name="Voss H."/>
            <person name="Wambutt R."/>
            <person name="Wedler H."/>
            <person name="Wiemann S."/>
            <person name="Winsor B."/>
            <person name="Wolfe K.H."/>
            <person name="Zollner A."/>
            <person name="Zumstein E."/>
            <person name="Kleine K."/>
        </authorList>
    </citation>
    <scope>NUCLEOTIDE SEQUENCE [LARGE SCALE GENOMIC DNA]</scope>
    <source>
        <strain>ATCC 204508 / S288c</strain>
    </source>
</reference>
<reference key="5">
    <citation type="journal article" date="2014" name="G3 (Bethesda)">
        <title>The reference genome sequence of Saccharomyces cerevisiae: Then and now.</title>
        <authorList>
            <person name="Engel S.R."/>
            <person name="Dietrich F.S."/>
            <person name="Fisk D.G."/>
            <person name="Binkley G."/>
            <person name="Balakrishnan R."/>
            <person name="Costanzo M.C."/>
            <person name="Dwight S.S."/>
            <person name="Hitz B.C."/>
            <person name="Karra K."/>
            <person name="Nash R.S."/>
            <person name="Weng S."/>
            <person name="Wong E.D."/>
            <person name="Lloyd P."/>
            <person name="Skrzypek M.S."/>
            <person name="Miyasato S.R."/>
            <person name="Simison M."/>
            <person name="Cherry J.M."/>
        </authorList>
    </citation>
    <scope>GENOME REANNOTATION</scope>
    <source>
        <strain>ATCC 204508 / S288c</strain>
    </source>
</reference>
<reference key="6">
    <citation type="journal article" date="2007" name="Genome Res.">
        <title>Approaching a complete repository of sequence-verified protein-encoding clones for Saccharomyces cerevisiae.</title>
        <authorList>
            <person name="Hu Y."/>
            <person name="Rolfs A."/>
            <person name="Bhullar B."/>
            <person name="Murthy T.V.S."/>
            <person name="Zhu C."/>
            <person name="Berger M.F."/>
            <person name="Camargo A.A."/>
            <person name="Kelley F."/>
            <person name="McCarron S."/>
            <person name="Jepson D."/>
            <person name="Richardson A."/>
            <person name="Raphael J."/>
            <person name="Moreira D."/>
            <person name="Taycher E."/>
            <person name="Zuo D."/>
            <person name="Mohr S."/>
            <person name="Kane M.F."/>
            <person name="Williamson J."/>
            <person name="Simpson A.J.G."/>
            <person name="Bulyk M.L."/>
            <person name="Harlow E."/>
            <person name="Marsischky G."/>
            <person name="Kolodner R.D."/>
            <person name="LaBaer J."/>
        </authorList>
    </citation>
    <scope>NUCLEOTIDE SEQUENCE [GENOMIC DNA]</scope>
    <source>
        <strain>ATCC 204508 / S288c</strain>
    </source>
</reference>
<reference key="7">
    <citation type="journal article" date="2003" name="J. Biol. Chem.">
        <title>Nat3p and Mdm20p are required for function of yeast NatB Nalpha-terminal acetyltransferase and of actin and tropomyosin.</title>
        <authorList>
            <person name="Polevoda B."/>
            <person name="Cardillo T.S."/>
            <person name="Doyle T.C."/>
            <person name="Bedi G.S."/>
            <person name="Sherman F."/>
        </authorList>
    </citation>
    <scope>FUNCTION</scope>
    <scope>SUBUNIT</scope>
    <scope>IDENTIFICATION BY MASS SPECTROMETRY</scope>
</reference>
<reference key="8">
    <citation type="journal article" date="2003" name="Nature">
        <title>Global analysis of protein localization in budding yeast.</title>
        <authorList>
            <person name="Huh W.-K."/>
            <person name="Falvo J.V."/>
            <person name="Gerke L.C."/>
            <person name="Carroll A.S."/>
            <person name="Howson R.W."/>
            <person name="Weissman J.S."/>
            <person name="O'Shea E.K."/>
        </authorList>
    </citation>
    <scope>SUBCELLULAR LOCATION [LARGE SCALE ANALYSIS]</scope>
</reference>
<reference key="9">
    <citation type="journal article" date="2003" name="Nature">
        <title>Global analysis of protein expression in yeast.</title>
        <authorList>
            <person name="Ghaemmaghami S."/>
            <person name="Huh W.-K."/>
            <person name="Bower K."/>
            <person name="Howson R.W."/>
            <person name="Belle A."/>
            <person name="Dephoure N."/>
            <person name="O'Shea E.K."/>
            <person name="Weissman J.S."/>
        </authorList>
    </citation>
    <scope>LEVEL OF PROTEIN EXPRESSION [LARGE SCALE ANALYSIS]</scope>
</reference>
<reference key="10">
    <citation type="journal article" date="2003" name="Proc. Natl. Acad. Sci. U.S.A.">
        <title>Mdm20 protein functions with Nat3 protein to acetylate Tpm1 protein and regulate tropomyosin-actin interactions in budding yeast.</title>
        <authorList>
            <person name="Singer J.M."/>
            <person name="Shaw J.M."/>
        </authorList>
    </citation>
    <scope>FUNCTION</scope>
</reference>
<reference key="11">
    <citation type="journal article" date="2012" name="Proc. Natl. Acad. Sci. U.S.A.">
        <title>N-terminal acetylome analyses and functional insights of the N-terminal acetyltransferase NatB.</title>
        <authorList>
            <person name="Van Damme P."/>
            <person name="Lasa M."/>
            <person name="Polevoda B."/>
            <person name="Gazquez C."/>
            <person name="Elosegui-Artola A."/>
            <person name="Kim D.S."/>
            <person name="De Juan-Pardo E."/>
            <person name="Demeyer K."/>
            <person name="Hole K."/>
            <person name="Larrea E."/>
            <person name="Timmerman E."/>
            <person name="Prieto J."/>
            <person name="Arnesen T."/>
            <person name="Sherman F."/>
            <person name="Gevaert K."/>
            <person name="Aldabe R."/>
        </authorList>
    </citation>
    <scope>ACETYLATION [LARGE SCALE ANALYSIS] AT SER-2</scope>
    <scope>CLEAVAGE OF INITIATOR METHIONINE [LARGE SCALE ANALYSIS]</scope>
    <scope>IDENTIFICATION BY MASS SPECTROMETRY [LARGE SCALE ANALYSIS]</scope>
</reference>
<protein>
    <recommendedName>
        <fullName>N-terminal acetyltransferase B complex subunit MDM20</fullName>
        <shortName>NatB complex subunit MDM20</shortName>
    </recommendedName>
    <alternativeName>
        <fullName>Dislikes extra CIN8 protein 1</fullName>
    </alternativeName>
    <alternativeName>
        <fullName>Mitochondrial distribution and morphology protein 20</fullName>
    </alternativeName>
</protein>
<evidence type="ECO:0000269" key="1">
    <source>
    </source>
</evidence>
<evidence type="ECO:0000269" key="2">
    <source>
    </source>
</evidence>
<evidence type="ECO:0000269" key="3">
    <source>
    </source>
</evidence>
<evidence type="ECO:0000269" key="4">
    <source>
    </source>
</evidence>
<evidence type="ECO:0000269" key="5">
    <source>
    </source>
</evidence>
<evidence type="ECO:0000305" key="6"/>
<evidence type="ECO:0007744" key="7">
    <source>
    </source>
</evidence>
<gene>
    <name type="primary">MDM20</name>
    <name type="synonym">DEC1</name>
    <name type="ordered locus">YOL076W</name>
</gene>
<proteinExistence type="evidence at protein level"/>
<feature type="initiator methionine" description="Removed" evidence="7">
    <location>
        <position position="1"/>
    </location>
</feature>
<feature type="chain" id="PRO_0000079850" description="N-terminal acetyltransferase B complex subunit MDM20">
    <location>
        <begin position="2"/>
        <end position="796"/>
    </location>
</feature>
<feature type="modified residue" description="N-acetylserine" evidence="7">
    <location>
        <position position="2"/>
    </location>
</feature>
<sequence length="796" mass="92809">MSDKIQEEILGLVSRSNFKQCYAKLGQLQKQFPNALYFKILETYVKFKQSPGKFDYNKLLEEPYGLKGTTITGDTRSLEFLHNFFVELGKYDEALHVYERGNFKFPSYELSYHWFMKALEDSNYNQMSKASLQLAKYSDSGNLPKRAYYFWNAISILAVSRFQENTLSDPKKILLSRLARQSLLDLKPFQNVQEIIVYCLVLDELFPQSREISEEIVAITFANFDTSVNLYLKNFILKHTKLLNSPQKLFEVCSKLIEKGLDDYELITNLIDAAYKLSKSKDEVKQWIDENLGDSRNTRLARLKLDIMYTDSVSESSLSYYLSKYHNKPCCSIDLNHYSGHINIDMLKSIMSKYDPEDKDLIHHCNILELGLIGSDSINNYNKFKGTLEKKSVTDYSSCSTFLLEIVKDKCKKTNPELKDVLLCITILENYQAKDPHNFDTMCWLIVLYMYLGLVPDAYFHFINLKIKNVQTDSLDYMIFSRFSTLFPNKQSDFYSKTFHEHNNLYDTSLANLPRYIQVAFERNSYSKILGMLEMRDKLMKSYTRWTKTLENLQFSRLCNDKRGHLLQKLHEDWRSLEMTQSVSFSDNRDFSILDENFAQFLNRGKILEYANLNEESIFLTLIRELIIEALPNGEKTEQISALLKKLPSINLEELLNNNLTEVESASFLIFFEIYENNGKNLHDLISRLMKVPINAKQNWMVSHTYLTKMATLKTLDSLKRIKDKEIQKLIKNSLKELRSCCDDVFKGYSKALVQAYEELKKDECGNLLKELDVKAENVKNIKNSLLGIQKSVRNL</sequence>
<dbReference type="EMBL" id="U36382">
    <property type="protein sequence ID" value="AAA79781.1"/>
    <property type="molecule type" value="Genomic_DNA"/>
</dbReference>
<dbReference type="EMBL" id="U54799">
    <property type="protein sequence ID" value="AAB00196.1"/>
    <property type="molecule type" value="Genomic_DNA"/>
</dbReference>
<dbReference type="EMBL" id="Z74818">
    <property type="protein sequence ID" value="CAA99086.1"/>
    <property type="molecule type" value="Genomic_DNA"/>
</dbReference>
<dbReference type="EMBL" id="AY693080">
    <property type="protein sequence ID" value="AAT93099.1"/>
    <property type="molecule type" value="Genomic_DNA"/>
</dbReference>
<dbReference type="EMBL" id="BK006948">
    <property type="protein sequence ID" value="DAA10708.1"/>
    <property type="molecule type" value="Genomic_DNA"/>
</dbReference>
<dbReference type="PIR" id="S66769">
    <property type="entry name" value="S66769"/>
</dbReference>
<dbReference type="RefSeq" id="NP_014566.1">
    <property type="nucleotide sequence ID" value="NM_001183330.1"/>
</dbReference>
<dbReference type="PDB" id="8BIP">
    <property type="method" value="EM"/>
    <property type="resolution" value="3.10 A"/>
    <property type="chains" value="B=1-796"/>
</dbReference>
<dbReference type="PDB" id="8BJQ">
    <property type="method" value="EM"/>
    <property type="resolution" value="3.80 A"/>
    <property type="chains" value="B/D=1-796"/>
</dbReference>
<dbReference type="PDBsum" id="8BIP"/>
<dbReference type="PDBsum" id="8BJQ"/>
<dbReference type="EMDB" id="EMD-16086"/>
<dbReference type="EMDB" id="EMD-16090"/>
<dbReference type="SMR" id="Q12387"/>
<dbReference type="BioGRID" id="34326">
    <property type="interactions" value="213"/>
</dbReference>
<dbReference type="ComplexPortal" id="CPX-782">
    <property type="entry name" value="NatB N-alpha-acetyltransferase complex"/>
</dbReference>
<dbReference type="FunCoup" id="Q12387">
    <property type="interactions" value="105"/>
</dbReference>
<dbReference type="IntAct" id="Q12387">
    <property type="interactions" value="27"/>
</dbReference>
<dbReference type="MINT" id="Q12387"/>
<dbReference type="STRING" id="4932.YOL076W"/>
<dbReference type="iPTMnet" id="Q12387"/>
<dbReference type="PaxDb" id="4932-YOL076W"/>
<dbReference type="PeptideAtlas" id="Q12387"/>
<dbReference type="EnsemblFungi" id="YOL076W_mRNA">
    <property type="protein sequence ID" value="YOL076W"/>
    <property type="gene ID" value="YOL076W"/>
</dbReference>
<dbReference type="GeneID" id="854079"/>
<dbReference type="KEGG" id="sce:YOL076W"/>
<dbReference type="AGR" id="SGD:S000005436"/>
<dbReference type="SGD" id="S000005436">
    <property type="gene designation" value="MDM20"/>
</dbReference>
<dbReference type="VEuPathDB" id="FungiDB:YOL076W"/>
<dbReference type="eggNOG" id="KOG2053">
    <property type="taxonomic scope" value="Eukaryota"/>
</dbReference>
<dbReference type="GeneTree" id="ENSGT00950000183174"/>
<dbReference type="HOGENOM" id="CLU_019572_0_0_1"/>
<dbReference type="InParanoid" id="Q12387"/>
<dbReference type="OMA" id="LPQLAYK"/>
<dbReference type="OrthoDB" id="1874341at2759"/>
<dbReference type="BioCyc" id="YEAST:G3O-33480-MONOMER"/>
<dbReference type="BRENDA" id="2.3.1.254">
    <property type="organism ID" value="984"/>
</dbReference>
<dbReference type="BioGRID-ORCS" id="854079">
    <property type="hits" value="1 hit in 10 CRISPR screens"/>
</dbReference>
<dbReference type="PRO" id="PR:Q12387"/>
<dbReference type="Proteomes" id="UP000002311">
    <property type="component" value="Chromosome XV"/>
</dbReference>
<dbReference type="RNAct" id="Q12387">
    <property type="molecule type" value="protein"/>
</dbReference>
<dbReference type="GO" id="GO:0005737">
    <property type="term" value="C:cytoplasm"/>
    <property type="evidence" value="ECO:0000318"/>
    <property type="project" value="GO_Central"/>
</dbReference>
<dbReference type="GO" id="GO:0031416">
    <property type="term" value="C:NatB complex"/>
    <property type="evidence" value="ECO:0000314"/>
    <property type="project" value="UniProtKB"/>
</dbReference>
<dbReference type="GO" id="GO:0010698">
    <property type="term" value="F:acetyltransferase activator activity"/>
    <property type="evidence" value="ECO:0000318"/>
    <property type="project" value="GO_Central"/>
</dbReference>
<dbReference type="GO" id="GO:0007010">
    <property type="term" value="P:cytoskeleton organization"/>
    <property type="evidence" value="ECO:0000315"/>
    <property type="project" value="SGD"/>
</dbReference>
<dbReference type="GO" id="GO:0000001">
    <property type="term" value="P:mitochondrion inheritance"/>
    <property type="evidence" value="ECO:0000315"/>
    <property type="project" value="SGD"/>
</dbReference>
<dbReference type="GO" id="GO:0032956">
    <property type="term" value="P:regulation of actin cytoskeleton organization"/>
    <property type="evidence" value="ECO:0000315"/>
    <property type="project" value="SGD"/>
</dbReference>
<dbReference type="InterPro" id="IPR019183">
    <property type="entry name" value="NAA25_NatB_aux_su"/>
</dbReference>
<dbReference type="PANTHER" id="PTHR22767:SF3">
    <property type="entry name" value="N-ALPHA-ACETYLTRANSFERASE 25, NATB AUXILIARY SUBUNIT"/>
    <property type="match status" value="1"/>
</dbReference>
<dbReference type="PANTHER" id="PTHR22767">
    <property type="entry name" value="N-TERMINAL ACETYLTRANSFERASE-RELATED"/>
    <property type="match status" value="1"/>
</dbReference>
<dbReference type="Pfam" id="PF09797">
    <property type="entry name" value="NatB_MDM20"/>
    <property type="match status" value="1"/>
</dbReference>
<comment type="function">
    <text evidence="1 2 5">Non-catalytic subunit of the NatB N-terminal acetyltransferase, which catalyzes acetylation of the amino-terminal methionine residues of all proteins beginning with Met-Asp or Met-Glu and of some proteins beginning with Met-Asn or Met-Met. NatB acetylates TPM1 protein and regulates tropomyocin-actin interactions. MDM20 is required for mitochondrial inheritance during budding and together with TPM1, is essential for the integrity and assembly of actin cables. Genetically interacts with CIN8.</text>
</comment>
<comment type="subunit">
    <text evidence="1">Component of the N-terminal acetyltransferase B (NatB) complex, which is composed of NAT3 and MDM20.</text>
</comment>
<comment type="subcellular location">
    <subcellularLocation>
        <location evidence="3">Cytoplasm</location>
    </subcellularLocation>
</comment>
<comment type="miscellaneous">
    <text evidence="4">Present with 5800 molecules/cell in log phase SD medium.</text>
</comment>
<comment type="similarity">
    <text evidence="6">Belongs to the MDM20/NAA25 family.</text>
</comment>
<organism>
    <name type="scientific">Saccharomyces cerevisiae (strain ATCC 204508 / S288c)</name>
    <name type="common">Baker's yeast</name>
    <dbReference type="NCBI Taxonomy" id="559292"/>
    <lineage>
        <taxon>Eukaryota</taxon>
        <taxon>Fungi</taxon>
        <taxon>Dikarya</taxon>
        <taxon>Ascomycota</taxon>
        <taxon>Saccharomycotina</taxon>
        <taxon>Saccharomycetes</taxon>
        <taxon>Saccharomycetales</taxon>
        <taxon>Saccharomycetaceae</taxon>
        <taxon>Saccharomyces</taxon>
    </lineage>
</organism>
<accession>Q12387</accession>
<accession>D6W1Z2</accession>